<evidence type="ECO:0000255" key="1">
    <source>
        <dbReference type="HAMAP-Rule" id="MF_00215"/>
    </source>
</evidence>
<reference key="1">
    <citation type="journal article" date="2003" name="Science">
        <title>Role of mobile DNA in the evolution of vancomycin-resistant Enterococcus faecalis.</title>
        <authorList>
            <person name="Paulsen I.T."/>
            <person name="Banerjei L."/>
            <person name="Myers G.S.A."/>
            <person name="Nelson K.E."/>
            <person name="Seshadri R."/>
            <person name="Read T.D."/>
            <person name="Fouts D.E."/>
            <person name="Eisen J.A."/>
            <person name="Gill S.R."/>
            <person name="Heidelberg J.F."/>
            <person name="Tettelin H."/>
            <person name="Dodson R.J."/>
            <person name="Umayam L.A."/>
            <person name="Brinkac L.M."/>
            <person name="Beanan M.J."/>
            <person name="Daugherty S.C."/>
            <person name="DeBoy R.T."/>
            <person name="Durkin S.A."/>
            <person name="Kolonay J.F."/>
            <person name="Madupu R."/>
            <person name="Nelson W.C."/>
            <person name="Vamathevan J.J."/>
            <person name="Tran B."/>
            <person name="Upton J."/>
            <person name="Hansen T."/>
            <person name="Shetty J."/>
            <person name="Khouri H.M."/>
            <person name="Utterback T.R."/>
            <person name="Radune D."/>
            <person name="Ketchum K.A."/>
            <person name="Dougherty B.A."/>
            <person name="Fraser C.M."/>
        </authorList>
    </citation>
    <scope>NUCLEOTIDE SEQUENCE [LARGE SCALE GENOMIC DNA]</scope>
    <source>
        <strain>ATCC 700802 / V583</strain>
    </source>
</reference>
<organism>
    <name type="scientific">Enterococcus faecalis (strain ATCC 700802 / V583)</name>
    <dbReference type="NCBI Taxonomy" id="226185"/>
    <lineage>
        <taxon>Bacteria</taxon>
        <taxon>Bacillati</taxon>
        <taxon>Bacillota</taxon>
        <taxon>Bacilli</taxon>
        <taxon>Lactobacillales</taxon>
        <taxon>Enterococcaceae</taxon>
        <taxon>Enterococcus</taxon>
    </lineage>
</organism>
<accession>Q839J7</accession>
<name>COAA_ENTFA</name>
<protein>
    <recommendedName>
        <fullName evidence="1">Pantothenate kinase</fullName>
        <ecNumber evidence="1">2.7.1.33</ecNumber>
    </recommendedName>
    <alternativeName>
        <fullName evidence="1">Pantothenic acid kinase</fullName>
    </alternativeName>
</protein>
<comment type="catalytic activity">
    <reaction evidence="1">
        <text>(R)-pantothenate + ATP = (R)-4'-phosphopantothenate + ADP + H(+)</text>
        <dbReference type="Rhea" id="RHEA:16373"/>
        <dbReference type="ChEBI" id="CHEBI:10986"/>
        <dbReference type="ChEBI" id="CHEBI:15378"/>
        <dbReference type="ChEBI" id="CHEBI:29032"/>
        <dbReference type="ChEBI" id="CHEBI:30616"/>
        <dbReference type="ChEBI" id="CHEBI:456216"/>
        <dbReference type="EC" id="2.7.1.33"/>
    </reaction>
</comment>
<comment type="pathway">
    <text evidence="1">Cofactor biosynthesis; coenzyme A biosynthesis; CoA from (R)-pantothenate: step 1/5.</text>
</comment>
<comment type="subcellular location">
    <subcellularLocation>
        <location evidence="1">Cytoplasm</location>
    </subcellularLocation>
</comment>
<comment type="similarity">
    <text evidence="1">Belongs to the prokaryotic pantothenate kinase family.</text>
</comment>
<sequence>MDDKMNYYPISREEWHGFYHDGKAPLTEAELDNIKSVNDQISLKDVQEIYVPLTHLIHLYMKEFESLTLSKGLFLHEYVSVPPFIIGIAGSVAVGKSTTARLLQRILARTFKRRNVQLITTDGFLYPNKVLEEQGIMDRKGFPESYDMEKLINFLNEVKSGKDEIKAPVYSHSVYDVIEGEYELIQQPDILIVEGINTLQLPANQQIYVSDFFDFSIFVDADPALIEKWYLERFGALLDTAFLDPNNYYYQYAIGKREDAFAMARNVWKTVNLPNLEEYILPTRGRADIILHKTENHLIDQIYLRKY</sequence>
<proteinExistence type="inferred from homology"/>
<gene>
    <name evidence="1" type="primary">coaA</name>
    <name type="ordered locus">EF_0168</name>
</gene>
<dbReference type="EC" id="2.7.1.33" evidence="1"/>
<dbReference type="EMBL" id="AE016830">
    <property type="protein sequence ID" value="AAO80042.1"/>
    <property type="molecule type" value="Genomic_DNA"/>
</dbReference>
<dbReference type="RefSeq" id="NP_813970.1">
    <property type="nucleotide sequence ID" value="NC_004668.1"/>
</dbReference>
<dbReference type="RefSeq" id="WP_002356160.1">
    <property type="nucleotide sequence ID" value="NZ_KE136524.1"/>
</dbReference>
<dbReference type="SMR" id="Q839J7"/>
<dbReference type="STRING" id="226185.EF_0168"/>
<dbReference type="EnsemblBacteria" id="AAO80042">
    <property type="protein sequence ID" value="AAO80042"/>
    <property type="gene ID" value="EF_0168"/>
</dbReference>
<dbReference type="GeneID" id="60892670"/>
<dbReference type="KEGG" id="efa:EF0168"/>
<dbReference type="PATRIC" id="fig|226185.45.peg.93"/>
<dbReference type="eggNOG" id="COG1072">
    <property type="taxonomic scope" value="Bacteria"/>
</dbReference>
<dbReference type="HOGENOM" id="CLU_053818_1_1_9"/>
<dbReference type="BRENDA" id="2.7.1.33">
    <property type="organism ID" value="2095"/>
</dbReference>
<dbReference type="UniPathway" id="UPA00241">
    <property type="reaction ID" value="UER00352"/>
</dbReference>
<dbReference type="Proteomes" id="UP000001415">
    <property type="component" value="Chromosome"/>
</dbReference>
<dbReference type="GO" id="GO:0005737">
    <property type="term" value="C:cytoplasm"/>
    <property type="evidence" value="ECO:0007669"/>
    <property type="project" value="UniProtKB-SubCell"/>
</dbReference>
<dbReference type="GO" id="GO:0005524">
    <property type="term" value="F:ATP binding"/>
    <property type="evidence" value="ECO:0007669"/>
    <property type="project" value="UniProtKB-UniRule"/>
</dbReference>
<dbReference type="GO" id="GO:0004594">
    <property type="term" value="F:pantothenate kinase activity"/>
    <property type="evidence" value="ECO:0007669"/>
    <property type="project" value="UniProtKB-UniRule"/>
</dbReference>
<dbReference type="GO" id="GO:0015937">
    <property type="term" value="P:coenzyme A biosynthetic process"/>
    <property type="evidence" value="ECO:0007669"/>
    <property type="project" value="UniProtKB-UniRule"/>
</dbReference>
<dbReference type="CDD" id="cd02025">
    <property type="entry name" value="PanK"/>
    <property type="match status" value="1"/>
</dbReference>
<dbReference type="Gene3D" id="3.40.50.300">
    <property type="entry name" value="P-loop containing nucleotide triphosphate hydrolases"/>
    <property type="match status" value="1"/>
</dbReference>
<dbReference type="HAMAP" id="MF_00215">
    <property type="entry name" value="Pantothen_kinase_1"/>
    <property type="match status" value="1"/>
</dbReference>
<dbReference type="InterPro" id="IPR027417">
    <property type="entry name" value="P-loop_NTPase"/>
</dbReference>
<dbReference type="InterPro" id="IPR004566">
    <property type="entry name" value="PanK"/>
</dbReference>
<dbReference type="InterPro" id="IPR006083">
    <property type="entry name" value="PRK/URK"/>
</dbReference>
<dbReference type="NCBIfam" id="TIGR00554">
    <property type="entry name" value="panK_bact"/>
    <property type="match status" value="1"/>
</dbReference>
<dbReference type="PANTHER" id="PTHR10285">
    <property type="entry name" value="URIDINE KINASE"/>
    <property type="match status" value="1"/>
</dbReference>
<dbReference type="Pfam" id="PF00485">
    <property type="entry name" value="PRK"/>
    <property type="match status" value="1"/>
</dbReference>
<dbReference type="PIRSF" id="PIRSF000545">
    <property type="entry name" value="Pantothenate_kin"/>
    <property type="match status" value="1"/>
</dbReference>
<dbReference type="SUPFAM" id="SSF52540">
    <property type="entry name" value="P-loop containing nucleoside triphosphate hydrolases"/>
    <property type="match status" value="1"/>
</dbReference>
<feature type="chain" id="PRO_0000194429" description="Pantothenate kinase">
    <location>
        <begin position="1"/>
        <end position="307"/>
    </location>
</feature>
<feature type="binding site" evidence="1">
    <location>
        <begin position="90"/>
        <end position="97"/>
    </location>
    <ligand>
        <name>ATP</name>
        <dbReference type="ChEBI" id="CHEBI:30616"/>
    </ligand>
</feature>
<keyword id="KW-0067">ATP-binding</keyword>
<keyword id="KW-0173">Coenzyme A biosynthesis</keyword>
<keyword id="KW-0963">Cytoplasm</keyword>
<keyword id="KW-0418">Kinase</keyword>
<keyword id="KW-0547">Nucleotide-binding</keyword>
<keyword id="KW-1185">Reference proteome</keyword>
<keyword id="KW-0808">Transferase</keyword>